<protein>
    <recommendedName>
        <fullName evidence="1">Large ribosomal subunit protein uL1</fullName>
    </recommendedName>
    <alternativeName>
        <fullName evidence="2">50S ribosomal protein L1</fullName>
    </alternativeName>
</protein>
<name>RL1_PARUW</name>
<dbReference type="EMBL" id="BX908798">
    <property type="protein sequence ID" value="CAF23325.1"/>
    <property type="molecule type" value="Genomic_DNA"/>
</dbReference>
<dbReference type="RefSeq" id="WP_011175151.1">
    <property type="nucleotide sequence ID" value="NC_005861.2"/>
</dbReference>
<dbReference type="SMR" id="Q6MDM4"/>
<dbReference type="STRING" id="264201.pc0601"/>
<dbReference type="KEGG" id="pcu:PC_RS02880"/>
<dbReference type="eggNOG" id="COG0081">
    <property type="taxonomic scope" value="Bacteria"/>
</dbReference>
<dbReference type="HOGENOM" id="CLU_062853_0_0_0"/>
<dbReference type="OrthoDB" id="9803740at2"/>
<dbReference type="Proteomes" id="UP000000529">
    <property type="component" value="Chromosome"/>
</dbReference>
<dbReference type="GO" id="GO:0015934">
    <property type="term" value="C:large ribosomal subunit"/>
    <property type="evidence" value="ECO:0007669"/>
    <property type="project" value="InterPro"/>
</dbReference>
<dbReference type="GO" id="GO:0019843">
    <property type="term" value="F:rRNA binding"/>
    <property type="evidence" value="ECO:0007669"/>
    <property type="project" value="UniProtKB-UniRule"/>
</dbReference>
<dbReference type="GO" id="GO:0003735">
    <property type="term" value="F:structural constituent of ribosome"/>
    <property type="evidence" value="ECO:0007669"/>
    <property type="project" value="InterPro"/>
</dbReference>
<dbReference type="GO" id="GO:0000049">
    <property type="term" value="F:tRNA binding"/>
    <property type="evidence" value="ECO:0007669"/>
    <property type="project" value="UniProtKB-KW"/>
</dbReference>
<dbReference type="GO" id="GO:0006417">
    <property type="term" value="P:regulation of translation"/>
    <property type="evidence" value="ECO:0007669"/>
    <property type="project" value="UniProtKB-KW"/>
</dbReference>
<dbReference type="GO" id="GO:0006412">
    <property type="term" value="P:translation"/>
    <property type="evidence" value="ECO:0007669"/>
    <property type="project" value="UniProtKB-UniRule"/>
</dbReference>
<dbReference type="CDD" id="cd00403">
    <property type="entry name" value="Ribosomal_L1"/>
    <property type="match status" value="1"/>
</dbReference>
<dbReference type="FunFam" id="3.40.50.790:FF:000001">
    <property type="entry name" value="50S ribosomal protein L1"/>
    <property type="match status" value="1"/>
</dbReference>
<dbReference type="Gene3D" id="3.30.190.20">
    <property type="match status" value="1"/>
</dbReference>
<dbReference type="Gene3D" id="3.40.50.790">
    <property type="match status" value="1"/>
</dbReference>
<dbReference type="HAMAP" id="MF_01318_B">
    <property type="entry name" value="Ribosomal_uL1_B"/>
    <property type="match status" value="1"/>
</dbReference>
<dbReference type="InterPro" id="IPR005878">
    <property type="entry name" value="Ribosom_uL1_bac-type"/>
</dbReference>
<dbReference type="InterPro" id="IPR002143">
    <property type="entry name" value="Ribosomal_uL1"/>
</dbReference>
<dbReference type="InterPro" id="IPR023674">
    <property type="entry name" value="Ribosomal_uL1-like"/>
</dbReference>
<dbReference type="InterPro" id="IPR028364">
    <property type="entry name" value="Ribosomal_uL1/biogenesis"/>
</dbReference>
<dbReference type="InterPro" id="IPR016095">
    <property type="entry name" value="Ribosomal_uL1_3-a/b-sand"/>
</dbReference>
<dbReference type="InterPro" id="IPR023673">
    <property type="entry name" value="Ribosomal_uL1_CS"/>
</dbReference>
<dbReference type="NCBIfam" id="TIGR01169">
    <property type="entry name" value="rplA_bact"/>
    <property type="match status" value="1"/>
</dbReference>
<dbReference type="PANTHER" id="PTHR36427">
    <property type="entry name" value="54S RIBOSOMAL PROTEIN L1, MITOCHONDRIAL"/>
    <property type="match status" value="1"/>
</dbReference>
<dbReference type="PANTHER" id="PTHR36427:SF3">
    <property type="entry name" value="LARGE RIBOSOMAL SUBUNIT PROTEIN UL1M"/>
    <property type="match status" value="1"/>
</dbReference>
<dbReference type="Pfam" id="PF00687">
    <property type="entry name" value="Ribosomal_L1"/>
    <property type="match status" value="1"/>
</dbReference>
<dbReference type="PIRSF" id="PIRSF002155">
    <property type="entry name" value="Ribosomal_L1"/>
    <property type="match status" value="1"/>
</dbReference>
<dbReference type="SUPFAM" id="SSF56808">
    <property type="entry name" value="Ribosomal protein L1"/>
    <property type="match status" value="1"/>
</dbReference>
<dbReference type="PROSITE" id="PS01199">
    <property type="entry name" value="RIBOSOMAL_L1"/>
    <property type="match status" value="1"/>
</dbReference>
<keyword id="KW-1185">Reference proteome</keyword>
<keyword id="KW-0678">Repressor</keyword>
<keyword id="KW-0687">Ribonucleoprotein</keyword>
<keyword id="KW-0689">Ribosomal protein</keyword>
<keyword id="KW-0694">RNA-binding</keyword>
<keyword id="KW-0699">rRNA-binding</keyword>
<keyword id="KW-0810">Translation regulation</keyword>
<keyword id="KW-0820">tRNA-binding</keyword>
<feature type="chain" id="PRO_0000125704" description="Large ribosomal subunit protein uL1">
    <location>
        <begin position="1"/>
        <end position="236"/>
    </location>
</feature>
<gene>
    <name evidence="1" type="primary">rplA</name>
    <name type="ordered locus">pc0601</name>
</gene>
<comment type="function">
    <text evidence="1">Binds directly to 23S rRNA. The L1 stalk is quite mobile in the ribosome, and is involved in E site tRNA release.</text>
</comment>
<comment type="function">
    <text evidence="1">Protein L1 is also a translational repressor protein, it controls the translation of the L11 operon by binding to its mRNA.</text>
</comment>
<comment type="subunit">
    <text evidence="1">Part of the 50S ribosomal subunit.</text>
</comment>
<comment type="similarity">
    <text evidence="1">Belongs to the universal ribosomal protein uL1 family.</text>
</comment>
<accession>Q6MDM4</accession>
<organism>
    <name type="scientific">Protochlamydia amoebophila (strain UWE25)</name>
    <dbReference type="NCBI Taxonomy" id="264201"/>
    <lineage>
        <taxon>Bacteria</taxon>
        <taxon>Pseudomonadati</taxon>
        <taxon>Chlamydiota</taxon>
        <taxon>Chlamydiia</taxon>
        <taxon>Parachlamydiales</taxon>
        <taxon>Parachlamydiaceae</taxon>
        <taxon>Candidatus Protochlamydia</taxon>
    </lineage>
</organism>
<proteinExistence type="inferred from homology"/>
<reference key="1">
    <citation type="journal article" date="2004" name="Science">
        <title>Illuminating the evolutionary history of chlamydiae.</title>
        <authorList>
            <person name="Horn M."/>
            <person name="Collingro A."/>
            <person name="Schmitz-Esser S."/>
            <person name="Beier C.L."/>
            <person name="Purkhold U."/>
            <person name="Fartmann B."/>
            <person name="Brandt P."/>
            <person name="Nyakatura G.J."/>
            <person name="Droege M."/>
            <person name="Frishman D."/>
            <person name="Rattei T."/>
            <person name="Mewes H.-W."/>
            <person name="Wagner M."/>
        </authorList>
    </citation>
    <scope>NUCLEOTIDE SEQUENCE [LARGE SCALE GENOMIC DNA]</scope>
    <source>
        <strain>UWE25</strain>
    </source>
</reference>
<evidence type="ECO:0000255" key="1">
    <source>
        <dbReference type="HAMAP-Rule" id="MF_01318"/>
    </source>
</evidence>
<evidence type="ECO:0000305" key="2"/>
<sequence>MGRPSKRIREIAKSLDAAKAYTIREAIDILKKCPPVKFDQTVEVSLKLGVDPRRSDQSVRGTVSLPNGTGKTMKILVFAKGDKVKEALEAGADYAGHDELLEKVNGGWTDFDAVVATPDMMREVGKLGKVLGPRGLMPTPKAGTVTTDIAKAIQELKAGKIEFKLDRHGVINNGVGKVSFESNKLEENIRAFLIAIQRAKPASAKGHYMRSLAISSTMGPGLKIDLRESDLAAKES</sequence>